<organism>
    <name type="scientific">Bos taurus</name>
    <name type="common">Bovine</name>
    <dbReference type="NCBI Taxonomy" id="9913"/>
    <lineage>
        <taxon>Eukaryota</taxon>
        <taxon>Metazoa</taxon>
        <taxon>Chordata</taxon>
        <taxon>Craniata</taxon>
        <taxon>Vertebrata</taxon>
        <taxon>Euteleostomi</taxon>
        <taxon>Mammalia</taxon>
        <taxon>Eutheria</taxon>
        <taxon>Laurasiatheria</taxon>
        <taxon>Artiodactyla</taxon>
        <taxon>Ruminantia</taxon>
        <taxon>Pecora</taxon>
        <taxon>Bovidae</taxon>
        <taxon>Bovinae</taxon>
        <taxon>Bos</taxon>
    </lineage>
</organism>
<sequence>MVGLQPSERPPTTSVKFLAAGTAACFADLLTFPLDTAKVRLQIQGENQAALAARSAQYRGVLGTILTMVRTEGPRSLYSGLVAGLQRQMSFASIRIGLYDSVKQFYTPKGSDHSSIITRILAGCTTGAMAVTCAQPTDVVKIRFQASMHTGLGGNRKYSGTMDAYRTIAREEGVRGLWKGILPNITRNAIVNCGEMVTYDIIKEKLLDYHLLTDNFPCHFVSAFGAGFCATLVASPVDVVKTRYMNSPPGQYHSPFDCMLKMVTQEGPTAFYKGFTPSFLRLGSWNVVMFVTYEQMKRALMKVQMLRDSPF</sequence>
<comment type="function">
    <text evidence="2">Putative transmembrane transporter that plays a role in mitochondrial metabolism via an as yet unclear mechanism. Originally, this mitochondrial protein was thought to act as a proton transmembrane transporter from the mitochondrial intermembrane space into the matrix, causing proton leaks through the inner mitochondrial membrane, thereby uncoupling mitochondrial membrane potential generation from ATP synthesis. However, this function is controversial and uncoupling may not be the function, or at least not the main function, but rather a consequence of more conventional metabolite transporter activity.</text>
</comment>
<comment type="subunit">
    <text evidence="2">Interacts with HAX1; the interaction is direct and calcium-dependent.</text>
</comment>
<comment type="subcellular location">
    <subcellularLocation>
        <location evidence="3">Mitochondrion inner membrane</location>
        <topology evidence="4">Multi-pass membrane protein</topology>
    </subcellularLocation>
</comment>
<comment type="similarity">
    <text evidence="7">Belongs to the mitochondrial carrier (TC 2.A.29) family.</text>
</comment>
<name>UCP3_BOVIN</name>
<feature type="chain" id="PRO_0000090670" description="Putative mitochondrial transporter UCP3">
    <location>
        <begin position="1"/>
        <end position="311"/>
    </location>
</feature>
<feature type="topological domain" description="Mitochondrial intermembrane" evidence="3">
    <location>
        <begin position="1"/>
        <end position="10"/>
    </location>
</feature>
<feature type="transmembrane region" description="Helical; Name=1" evidence="4">
    <location>
        <begin position="11"/>
        <end position="32"/>
    </location>
</feature>
<feature type="topological domain" description="Mitochondrial matrix" evidence="3">
    <location>
        <begin position="33"/>
        <end position="76"/>
    </location>
</feature>
<feature type="transmembrane region" description="Helical; Name=2" evidence="4">
    <location>
        <begin position="77"/>
        <end position="99"/>
    </location>
</feature>
<feature type="topological domain" description="Mitochondrial intermembrane" evidence="3">
    <location>
        <begin position="100"/>
        <end position="119"/>
    </location>
</feature>
<feature type="transmembrane region" description="Helical; Name=3" evidence="4">
    <location>
        <begin position="120"/>
        <end position="136"/>
    </location>
</feature>
<feature type="topological domain" description="Mitochondrial matrix" evidence="3">
    <location>
        <begin position="137"/>
        <end position="182"/>
    </location>
</feature>
<feature type="transmembrane region" description="Helical; Name=4" evidence="4">
    <location>
        <begin position="183"/>
        <end position="199"/>
    </location>
</feature>
<feature type="topological domain" description="Mitochondrial intermembrane" evidence="3">
    <location>
        <begin position="200"/>
        <end position="216"/>
    </location>
</feature>
<feature type="transmembrane region" description="Helical; Name=5" evidence="4">
    <location>
        <begin position="217"/>
        <end position="236"/>
    </location>
</feature>
<feature type="topological domain" description="Mitochondrial matrix" evidence="3">
    <location>
        <begin position="237"/>
        <end position="270"/>
    </location>
</feature>
<feature type="transmembrane region" description="Helical; Name=6" evidence="4">
    <location>
        <begin position="271"/>
        <end position="293"/>
    </location>
</feature>
<feature type="topological domain" description="Mitochondrial intermembrane" evidence="3">
    <location>
        <begin position="294"/>
        <end position="311"/>
    </location>
</feature>
<feature type="repeat" description="Solcar 1">
    <location>
        <begin position="11"/>
        <end position="105"/>
    </location>
</feature>
<feature type="repeat" description="Solcar 2">
    <location>
        <begin position="114"/>
        <end position="205"/>
    </location>
</feature>
<feature type="repeat" description="Solcar 3">
    <location>
        <begin position="214"/>
        <end position="299"/>
    </location>
</feature>
<feature type="region of interest" description="Purine nucleotide binding" evidence="1">
    <location>
        <begin position="278"/>
        <end position="300"/>
    </location>
</feature>
<feature type="sequence variant" evidence="5">
    <original>A</original>
    <variation>T</variation>
    <location>
        <position position="53"/>
    </location>
</feature>
<protein>
    <recommendedName>
        <fullName evidence="7">Putative mitochondrial transporter UCP3</fullName>
    </recommendedName>
    <alternativeName>
        <fullName>Solute carrier family 25 member 9</fullName>
    </alternativeName>
    <alternativeName>
        <fullName evidence="6">Uncoupling protein 3</fullName>
        <shortName>UCP 3</shortName>
    </alternativeName>
</protein>
<proteinExistence type="evidence at transcript level"/>
<keyword id="KW-0472">Membrane</keyword>
<keyword id="KW-0496">Mitochondrion</keyword>
<keyword id="KW-0999">Mitochondrion inner membrane</keyword>
<keyword id="KW-1185">Reference proteome</keyword>
<keyword id="KW-0677">Repeat</keyword>
<keyword id="KW-0812">Transmembrane</keyword>
<keyword id="KW-1133">Transmembrane helix</keyword>
<keyword id="KW-0813">Transport</keyword>
<reference key="1">
    <citation type="journal article" date="1999" name="Anim. Genet.">
        <title>Bovine UCP2 and UCP3 map to BTA15.</title>
        <authorList>
            <person name="Stone R.T."/>
            <person name="Rexroad C.E. III"/>
            <person name="Smith T.P.L."/>
        </authorList>
    </citation>
    <scope>NUCLEOTIDE SEQUENCE [MRNA]</scope>
    <scope>NUCLEOTIDE SEQUENCE [GENOMIC DNA] OF 1-274</scope>
    <scope>VARIANT THR-53</scope>
    <source>
        <tissue>Muscle</tissue>
    </source>
</reference>
<evidence type="ECO:0000250" key="1"/>
<evidence type="ECO:0000250" key="2">
    <source>
        <dbReference type="UniProtKB" id="P55916"/>
    </source>
</evidence>
<evidence type="ECO:0000250" key="3">
    <source>
        <dbReference type="UniProtKB" id="P56501"/>
    </source>
</evidence>
<evidence type="ECO:0000255" key="4"/>
<evidence type="ECO:0000269" key="5">
    <source>
    </source>
</evidence>
<evidence type="ECO:0000303" key="6">
    <source>
    </source>
</evidence>
<evidence type="ECO:0000305" key="7"/>
<dbReference type="EMBL" id="AF092048">
    <property type="protein sequence ID" value="AAC61762.1"/>
    <property type="molecule type" value="mRNA"/>
</dbReference>
<dbReference type="EMBL" id="AF127030">
    <property type="protein sequence ID" value="AAD33339.1"/>
    <property type="molecule type" value="Genomic_DNA"/>
</dbReference>
<dbReference type="RefSeq" id="NP_776635.1">
    <property type="nucleotide sequence ID" value="NM_174210.1"/>
</dbReference>
<dbReference type="SMR" id="O77792"/>
<dbReference type="FunCoup" id="O77792">
    <property type="interactions" value="485"/>
</dbReference>
<dbReference type="STRING" id="9913.ENSBTAP00000006918"/>
<dbReference type="PaxDb" id="9913-ENSBTAP00000006918"/>
<dbReference type="Ensembl" id="ENSBTAT00000006918.5">
    <property type="protein sequence ID" value="ENSBTAP00000006918.5"/>
    <property type="gene ID" value="ENSBTAG00000005259.6"/>
</dbReference>
<dbReference type="GeneID" id="281563"/>
<dbReference type="KEGG" id="bta:281563"/>
<dbReference type="CTD" id="7352"/>
<dbReference type="VEuPathDB" id="HostDB:ENSBTAG00000005259"/>
<dbReference type="VGNC" id="VGNC:36642">
    <property type="gene designation" value="UCP3"/>
</dbReference>
<dbReference type="eggNOG" id="KOG0753">
    <property type="taxonomic scope" value="Eukaryota"/>
</dbReference>
<dbReference type="GeneTree" id="ENSGT00940000161030"/>
<dbReference type="InParanoid" id="O77792"/>
<dbReference type="OMA" id="TRIMSAH"/>
<dbReference type="OrthoDB" id="448427at2759"/>
<dbReference type="Reactome" id="R-BTA-167826">
    <property type="pathway name" value="The fatty acid cycling model"/>
</dbReference>
<dbReference type="Proteomes" id="UP000009136">
    <property type="component" value="Chromosome 15"/>
</dbReference>
<dbReference type="Bgee" id="ENSBTAG00000005259">
    <property type="expression patterns" value="Expressed in infraspinatus muscle and 43 other cell types or tissues"/>
</dbReference>
<dbReference type="GO" id="GO:0005743">
    <property type="term" value="C:mitochondrial inner membrane"/>
    <property type="evidence" value="ECO:0000250"/>
    <property type="project" value="UniProtKB"/>
</dbReference>
<dbReference type="GO" id="GO:0017077">
    <property type="term" value="F:oxidative phosphorylation uncoupler activity"/>
    <property type="evidence" value="ECO:0000318"/>
    <property type="project" value="GO_Central"/>
</dbReference>
<dbReference type="GO" id="GO:0015078">
    <property type="term" value="F:proton transmembrane transporter activity"/>
    <property type="evidence" value="ECO:0007669"/>
    <property type="project" value="Ensembl"/>
</dbReference>
<dbReference type="GO" id="GO:1990845">
    <property type="term" value="P:adaptive thermogenesis"/>
    <property type="evidence" value="ECO:0000318"/>
    <property type="project" value="GO_Central"/>
</dbReference>
<dbReference type="GO" id="GO:0006631">
    <property type="term" value="P:fatty acid metabolic process"/>
    <property type="evidence" value="ECO:0007669"/>
    <property type="project" value="Ensembl"/>
</dbReference>
<dbReference type="GO" id="GO:1901373">
    <property type="term" value="P:lipid hydroperoxide transport"/>
    <property type="evidence" value="ECO:0007669"/>
    <property type="project" value="Ensembl"/>
</dbReference>
<dbReference type="GO" id="GO:1990542">
    <property type="term" value="P:mitochondrial transmembrane transport"/>
    <property type="evidence" value="ECO:0000318"/>
    <property type="project" value="GO_Central"/>
</dbReference>
<dbReference type="GO" id="GO:0009409">
    <property type="term" value="P:response to cold"/>
    <property type="evidence" value="ECO:0000318"/>
    <property type="project" value="GO_Central"/>
</dbReference>
<dbReference type="GO" id="GO:0000303">
    <property type="term" value="P:response to superoxide"/>
    <property type="evidence" value="ECO:0007669"/>
    <property type="project" value="Ensembl"/>
</dbReference>
<dbReference type="FunFam" id="1.50.40.10:FF:000008">
    <property type="entry name" value="Mitochondrial uncoupling protein 2"/>
    <property type="match status" value="1"/>
</dbReference>
<dbReference type="Gene3D" id="1.50.40.10">
    <property type="entry name" value="Mitochondrial carrier domain"/>
    <property type="match status" value="1"/>
</dbReference>
<dbReference type="InterPro" id="IPR002067">
    <property type="entry name" value="Mit_carrier"/>
</dbReference>
<dbReference type="InterPro" id="IPR050391">
    <property type="entry name" value="Mito_Metabolite_Transporter"/>
</dbReference>
<dbReference type="InterPro" id="IPR018108">
    <property type="entry name" value="Mitochondrial_sb/sol_carrier"/>
</dbReference>
<dbReference type="InterPro" id="IPR023395">
    <property type="entry name" value="Mt_carrier_dom_sf"/>
</dbReference>
<dbReference type="PANTHER" id="PTHR45618">
    <property type="entry name" value="MITOCHONDRIAL DICARBOXYLATE CARRIER-RELATED"/>
    <property type="match status" value="1"/>
</dbReference>
<dbReference type="Pfam" id="PF00153">
    <property type="entry name" value="Mito_carr"/>
    <property type="match status" value="3"/>
</dbReference>
<dbReference type="PRINTS" id="PR00784">
    <property type="entry name" value="MTUNCOUPLING"/>
</dbReference>
<dbReference type="SUPFAM" id="SSF103506">
    <property type="entry name" value="Mitochondrial carrier"/>
    <property type="match status" value="1"/>
</dbReference>
<dbReference type="PROSITE" id="PS50920">
    <property type="entry name" value="SOLCAR"/>
    <property type="match status" value="3"/>
</dbReference>
<accession>O77792</accession>
<accession>Q9TVA1</accession>
<gene>
    <name evidence="6" type="primary">UCP3</name>
    <name type="synonym">SLC25A9</name>
</gene>